<protein>
    <recommendedName>
        <fullName evidence="1">Uroporphyrinogen decarboxylase</fullName>
        <shortName evidence="1">UPD</shortName>
        <shortName evidence="1">URO-D</shortName>
        <ecNumber evidence="1">4.1.1.37</ecNumber>
    </recommendedName>
</protein>
<accession>A5CDS4</accession>
<feature type="chain" id="PRO_0000313684" description="Uroporphyrinogen decarboxylase">
    <location>
        <begin position="1"/>
        <end position="342"/>
    </location>
</feature>
<feature type="binding site" evidence="1">
    <location>
        <begin position="22"/>
        <end position="26"/>
    </location>
    <ligand>
        <name>substrate</name>
    </ligand>
</feature>
<feature type="binding site" evidence="1">
    <location>
        <position position="41"/>
    </location>
    <ligand>
        <name>substrate</name>
    </ligand>
</feature>
<feature type="binding site" evidence="1">
    <location>
        <position position="72"/>
    </location>
    <ligand>
        <name>substrate</name>
    </ligand>
</feature>
<feature type="binding site" evidence="1">
    <location>
        <position position="146"/>
    </location>
    <ligand>
        <name>substrate</name>
    </ligand>
</feature>
<feature type="binding site" evidence="1">
    <location>
        <position position="201"/>
    </location>
    <ligand>
        <name>substrate</name>
    </ligand>
</feature>
<feature type="binding site" evidence="1">
    <location>
        <position position="317"/>
    </location>
    <ligand>
        <name>substrate</name>
    </ligand>
</feature>
<feature type="site" description="Transition state stabilizer" evidence="1">
    <location>
        <position position="72"/>
    </location>
</feature>
<organism>
    <name type="scientific">Orientia tsutsugamushi (strain Boryong)</name>
    <name type="common">Rickettsia tsutsugamushi</name>
    <dbReference type="NCBI Taxonomy" id="357244"/>
    <lineage>
        <taxon>Bacteria</taxon>
        <taxon>Pseudomonadati</taxon>
        <taxon>Pseudomonadota</taxon>
        <taxon>Alphaproteobacteria</taxon>
        <taxon>Rickettsiales</taxon>
        <taxon>Rickettsiaceae</taxon>
        <taxon>Rickettsieae</taxon>
        <taxon>Orientia</taxon>
    </lineage>
</organism>
<comment type="function">
    <text evidence="1">Catalyzes the decarboxylation of four acetate groups of uroporphyrinogen-III to yield coproporphyrinogen-III.</text>
</comment>
<comment type="catalytic activity">
    <reaction evidence="1">
        <text>uroporphyrinogen III + 4 H(+) = coproporphyrinogen III + 4 CO2</text>
        <dbReference type="Rhea" id="RHEA:19865"/>
        <dbReference type="ChEBI" id="CHEBI:15378"/>
        <dbReference type="ChEBI" id="CHEBI:16526"/>
        <dbReference type="ChEBI" id="CHEBI:57308"/>
        <dbReference type="ChEBI" id="CHEBI:57309"/>
        <dbReference type="EC" id="4.1.1.37"/>
    </reaction>
</comment>
<comment type="pathway">
    <text evidence="1">Porphyrin-containing compound metabolism; protoporphyrin-IX biosynthesis; coproporphyrinogen-III from 5-aminolevulinate: step 4/4.</text>
</comment>
<comment type="subunit">
    <text evidence="1">Homodimer.</text>
</comment>
<comment type="subcellular location">
    <subcellularLocation>
        <location evidence="1">Cytoplasm</location>
    </subcellularLocation>
</comment>
<comment type="similarity">
    <text evidence="1">Belongs to the uroporphyrinogen decarboxylase family.</text>
</comment>
<keyword id="KW-0963">Cytoplasm</keyword>
<keyword id="KW-0210">Decarboxylase</keyword>
<keyword id="KW-0456">Lyase</keyword>
<keyword id="KW-0627">Porphyrin biosynthesis</keyword>
<keyword id="KW-1185">Reference proteome</keyword>
<name>DCUP_ORITB</name>
<evidence type="ECO:0000255" key="1">
    <source>
        <dbReference type="HAMAP-Rule" id="MF_00218"/>
    </source>
</evidence>
<dbReference type="EC" id="4.1.1.37" evidence="1"/>
<dbReference type="EMBL" id="AM494475">
    <property type="protein sequence ID" value="CAM80076.1"/>
    <property type="molecule type" value="Genomic_DNA"/>
</dbReference>
<dbReference type="RefSeq" id="WP_011944736.1">
    <property type="nucleotide sequence ID" value="NC_009488.1"/>
</dbReference>
<dbReference type="SMR" id="A5CDS4"/>
<dbReference type="KEGG" id="ots:OTBS_1010"/>
<dbReference type="eggNOG" id="COG0407">
    <property type="taxonomic scope" value="Bacteria"/>
</dbReference>
<dbReference type="HOGENOM" id="CLU_040933_0_0_5"/>
<dbReference type="UniPathway" id="UPA00251">
    <property type="reaction ID" value="UER00321"/>
</dbReference>
<dbReference type="Proteomes" id="UP000001565">
    <property type="component" value="Chromosome"/>
</dbReference>
<dbReference type="GO" id="GO:0005829">
    <property type="term" value="C:cytosol"/>
    <property type="evidence" value="ECO:0007669"/>
    <property type="project" value="TreeGrafter"/>
</dbReference>
<dbReference type="GO" id="GO:0004853">
    <property type="term" value="F:uroporphyrinogen decarboxylase activity"/>
    <property type="evidence" value="ECO:0007669"/>
    <property type="project" value="UniProtKB-UniRule"/>
</dbReference>
<dbReference type="GO" id="GO:0006782">
    <property type="term" value="P:protoporphyrinogen IX biosynthetic process"/>
    <property type="evidence" value="ECO:0007669"/>
    <property type="project" value="UniProtKB-UniRule"/>
</dbReference>
<dbReference type="Gene3D" id="3.20.20.210">
    <property type="match status" value="1"/>
</dbReference>
<dbReference type="HAMAP" id="MF_00218">
    <property type="entry name" value="URO_D"/>
    <property type="match status" value="1"/>
</dbReference>
<dbReference type="InterPro" id="IPR038071">
    <property type="entry name" value="UROD/MetE-like_sf"/>
</dbReference>
<dbReference type="InterPro" id="IPR006361">
    <property type="entry name" value="Uroporphyrinogen_deCO2ase_HemE"/>
</dbReference>
<dbReference type="InterPro" id="IPR000257">
    <property type="entry name" value="Uroporphyrinogen_deCOase"/>
</dbReference>
<dbReference type="NCBIfam" id="TIGR01464">
    <property type="entry name" value="hemE"/>
    <property type="match status" value="1"/>
</dbReference>
<dbReference type="PANTHER" id="PTHR21091">
    <property type="entry name" value="METHYLTETRAHYDROFOLATE:HOMOCYSTEINE METHYLTRANSFERASE RELATED"/>
    <property type="match status" value="1"/>
</dbReference>
<dbReference type="PANTHER" id="PTHR21091:SF169">
    <property type="entry name" value="UROPORPHYRINOGEN DECARBOXYLASE"/>
    <property type="match status" value="1"/>
</dbReference>
<dbReference type="Pfam" id="PF01208">
    <property type="entry name" value="URO-D"/>
    <property type="match status" value="1"/>
</dbReference>
<dbReference type="SUPFAM" id="SSF51726">
    <property type="entry name" value="UROD/MetE-like"/>
    <property type="match status" value="1"/>
</dbReference>
<dbReference type="PROSITE" id="PS00906">
    <property type="entry name" value="UROD_1"/>
    <property type="match status" value="1"/>
</dbReference>
<reference key="1">
    <citation type="journal article" date="2007" name="Proc. Natl. Acad. Sci. U.S.A.">
        <title>The Orientia tsutsugamushi genome reveals massive proliferation of conjugative type IV secretion system and host-cell interaction genes.</title>
        <authorList>
            <person name="Cho N.-H."/>
            <person name="Kim H.-R."/>
            <person name="Lee J.-H."/>
            <person name="Kim S.-Y."/>
            <person name="Kim J."/>
            <person name="Cha S."/>
            <person name="Kim S.-Y."/>
            <person name="Darby A.C."/>
            <person name="Fuxelius H.-H."/>
            <person name="Yin J."/>
            <person name="Kim J.H."/>
            <person name="Kim J."/>
            <person name="Lee S.J."/>
            <person name="Koh Y.-S."/>
            <person name="Jang W.-J."/>
            <person name="Park K.-H."/>
            <person name="Andersson S.G.E."/>
            <person name="Choi M.-S."/>
            <person name="Kim I.-S."/>
        </authorList>
    </citation>
    <scope>NUCLEOTIDE SEQUENCE [LARGE SCALE GENOMIC DNA]</scope>
    <source>
        <strain>Boryong</strain>
    </source>
</reference>
<gene>
    <name evidence="1" type="primary">hemE</name>
    <name type="ordered locus">OTBS_1010</name>
</gene>
<proteinExistence type="inferred from homology"/>
<sequence length="342" mass="39011">MSKIIQAFHSSNKNYTPIWFMRQAGRYLPEYQVLKRTTNSFFELCYNPIKAAEATLQPIARFDFDAAIIFSDILVLPDSLGINIRFINNLCPTAEKIPNLLDLQKSKIQNTKISKVYEAIDIVRKKLNKKKSLIGFCGGPWTVLTYILGYNSRNTPKFHEIKSNNKHELIVDSINILTKHTIDHLANQILAGADIVQIFDSWAGILPYQEFSEYVIKPTSNIVKTLKEKFPHIKIIGFPKGAGKLYHKYTKETNVDGISCDYDLQLDEMLKLQKNVLVQGNLNPNTILSKNSKIIEESVIKIMDTLSNNRFIFNLGHGILPETPIKNVELIVKLVKNYHSSE</sequence>